<comment type="subcellular location">
    <subcellularLocation>
        <location evidence="1">Secreted</location>
    </subcellularLocation>
    <text evidence="1">Sperm surface.</text>
</comment>
<comment type="similarity">
    <text evidence="3">Belongs to the beta-microseminoprotein family.</text>
</comment>
<evidence type="ECO:0000250" key="1"/>
<evidence type="ECO:0000255" key="2"/>
<evidence type="ECO:0000305" key="3"/>
<evidence type="ECO:0000312" key="4">
    <source>
        <dbReference type="EMBL" id="CAB38123.1"/>
    </source>
</evidence>
<organism evidence="4">
    <name type="scientific">Saguinus oedipus</name>
    <name type="common">Cotton-top tamarin</name>
    <dbReference type="NCBI Taxonomy" id="9490"/>
    <lineage>
        <taxon>Eukaryota</taxon>
        <taxon>Metazoa</taxon>
        <taxon>Chordata</taxon>
        <taxon>Craniata</taxon>
        <taxon>Vertebrata</taxon>
        <taxon>Euteleostomi</taxon>
        <taxon>Mammalia</taxon>
        <taxon>Eutheria</taxon>
        <taxon>Euarchontoglires</taxon>
        <taxon>Primates</taxon>
        <taxon>Haplorrhini</taxon>
        <taxon>Platyrrhini</taxon>
        <taxon>Cebidae</taxon>
        <taxon>Callitrichinae</taxon>
        <taxon>Saguinus</taxon>
    </lineage>
</organism>
<sequence length="114" mass="12746">MNVLLGGLVIFATFVTLCNASCYIILNDMIPGDSTNECTDLKGNKHPINSKWRTDNCDSCTCREKEISCCTLVSTPVGYDTHKCQKIFNKEDCRISVVEKNDPSKTCEVNAWIM</sequence>
<proteinExistence type="inferred from homology"/>
<dbReference type="EMBL" id="AJ010155">
    <property type="protein sequence ID" value="CAB38123.1"/>
    <property type="molecule type" value="Genomic_DNA"/>
</dbReference>
<dbReference type="SMR" id="O97949"/>
<dbReference type="GO" id="GO:0005576">
    <property type="term" value="C:extracellular region"/>
    <property type="evidence" value="ECO:0000303"/>
    <property type="project" value="UniProtKB"/>
</dbReference>
<dbReference type="FunFam" id="2.10.70.10:FF:000137">
    <property type="entry name" value="Beta-microseminoprotein"/>
    <property type="match status" value="1"/>
</dbReference>
<dbReference type="Gene3D" id="2.20.25.590">
    <property type="match status" value="1"/>
</dbReference>
<dbReference type="Gene3D" id="2.10.70.10">
    <property type="entry name" value="Complement Module, domain 1"/>
    <property type="match status" value="1"/>
</dbReference>
<dbReference type="InterPro" id="IPR008735">
    <property type="entry name" value="PSP94"/>
</dbReference>
<dbReference type="PANTHER" id="PTHR10500">
    <property type="entry name" value="BETA-MICROSEMINOPROTEIN"/>
    <property type="match status" value="1"/>
</dbReference>
<dbReference type="PANTHER" id="PTHR10500:SF8">
    <property type="entry name" value="BETA-MICROSEMINOPROTEIN"/>
    <property type="match status" value="1"/>
</dbReference>
<dbReference type="Pfam" id="PF05825">
    <property type="entry name" value="PSP94"/>
    <property type="match status" value="1"/>
</dbReference>
<accession>O97949</accession>
<feature type="signal peptide" evidence="2">
    <location>
        <begin position="1"/>
        <end position="20"/>
    </location>
</feature>
<feature type="chain" id="PRO_0000019276" description="Beta-microseminoprotein J1">
    <location>
        <begin position="21"/>
        <end position="114"/>
    </location>
</feature>
<feature type="disulfide bond" evidence="1">
    <location>
        <begin position="22"/>
        <end position="70"/>
    </location>
</feature>
<feature type="disulfide bond" evidence="1">
    <location>
        <begin position="38"/>
        <end position="62"/>
    </location>
</feature>
<feature type="disulfide bond" evidence="1">
    <location>
        <begin position="57"/>
        <end position="93"/>
    </location>
</feature>
<feature type="disulfide bond" evidence="1">
    <location>
        <begin position="60"/>
        <end position="69"/>
    </location>
</feature>
<feature type="disulfide bond" evidence="1">
    <location>
        <begin position="84"/>
        <end position="107"/>
    </location>
</feature>
<gene>
    <name type="primary">MSPJ</name>
</gene>
<protein>
    <recommendedName>
        <fullName>Beta-microseminoprotein J1</fullName>
        <shortName>msp-J1</shortName>
    </recommendedName>
</protein>
<name>MSPJ_SAGOE</name>
<keyword id="KW-1015">Disulfide bond</keyword>
<keyword id="KW-0964">Secreted</keyword>
<keyword id="KW-0732">Signal</keyword>
<reference evidence="3" key="1">
    <citation type="journal article" date="1999" name="Eur. J. Biochem.">
        <title>New world, but not old world, monkeys carry several genes encoding beta-microseminoprotein.</title>
        <authorList>
            <person name="Maekinen M."/>
            <person name="Valtonen-Andre C."/>
            <person name="Lundwall A."/>
        </authorList>
    </citation>
    <scope>NUCLEOTIDE SEQUENCE [GENOMIC DNA]</scope>
</reference>